<sequence>MTNNEIIAATDGSSLANPGPSGWAWYVDENTWDSGGWDIATNNIAELTAVRELLIATRHTDRPILILSDSKYVINSLTKWVYSWKMRKWRKADGKPVLNQEIIQEIDSLMENRNIRMSWVNAHTGHPLNEAADSLARQAANNFSTRSAHIPGPGWTERSAK</sequence>
<keyword id="KW-0963">Cytoplasm</keyword>
<keyword id="KW-0255">Endonuclease</keyword>
<keyword id="KW-0378">Hydrolase</keyword>
<keyword id="KW-0460">Magnesium</keyword>
<keyword id="KW-0479">Metal-binding</keyword>
<keyword id="KW-0540">Nuclease</keyword>
<comment type="function">
    <text evidence="1">Endonuclease that specifically degrades the RNA of RNA-DNA hybrids.</text>
</comment>
<comment type="catalytic activity">
    <reaction evidence="1">
        <text>Endonucleolytic cleavage to 5'-phosphomonoester.</text>
        <dbReference type="EC" id="3.1.26.4"/>
    </reaction>
</comment>
<comment type="cofactor">
    <cofactor evidence="1">
        <name>Mg(2+)</name>
        <dbReference type="ChEBI" id="CHEBI:18420"/>
    </cofactor>
    <text evidence="1">Binds 1 Mg(2+) ion per subunit. May bind a second metal ion at a regulatory site, or after substrate binding.</text>
</comment>
<comment type="subunit">
    <text evidence="1">Monomer.</text>
</comment>
<comment type="subcellular location">
    <subcellularLocation>
        <location evidence="1">Cytoplasm</location>
    </subcellularLocation>
</comment>
<comment type="similarity">
    <text evidence="1">Belongs to the RNase H family.</text>
</comment>
<organism>
    <name type="scientific">Tropheryma whipplei (strain TW08/27)</name>
    <name type="common">Whipple's bacillus</name>
    <dbReference type="NCBI Taxonomy" id="218496"/>
    <lineage>
        <taxon>Bacteria</taxon>
        <taxon>Bacillati</taxon>
        <taxon>Actinomycetota</taxon>
        <taxon>Actinomycetes</taxon>
        <taxon>Micrococcales</taxon>
        <taxon>Tropherymataceae</taxon>
        <taxon>Tropheryma</taxon>
    </lineage>
</organism>
<accession>Q83HK9</accession>
<name>RNH_TROW8</name>
<proteinExistence type="inferred from homology"/>
<gene>
    <name evidence="1" type="primary">rnhA</name>
    <name type="ordered locus">TW531</name>
</gene>
<dbReference type="EC" id="3.1.26.4" evidence="1"/>
<dbReference type="EMBL" id="BX251411">
    <property type="protein sequence ID" value="CAD67198.1"/>
    <property type="molecule type" value="Genomic_DNA"/>
</dbReference>
<dbReference type="RefSeq" id="WP_011096478.1">
    <property type="nucleotide sequence ID" value="NC_004551.1"/>
</dbReference>
<dbReference type="SMR" id="Q83HK9"/>
<dbReference type="GeneID" id="67388311"/>
<dbReference type="KEGG" id="tws:TW531"/>
<dbReference type="HOGENOM" id="CLU_030894_6_1_11"/>
<dbReference type="GO" id="GO:0005737">
    <property type="term" value="C:cytoplasm"/>
    <property type="evidence" value="ECO:0007669"/>
    <property type="project" value="UniProtKB-SubCell"/>
</dbReference>
<dbReference type="GO" id="GO:0000287">
    <property type="term" value="F:magnesium ion binding"/>
    <property type="evidence" value="ECO:0007669"/>
    <property type="project" value="UniProtKB-UniRule"/>
</dbReference>
<dbReference type="GO" id="GO:0003676">
    <property type="term" value="F:nucleic acid binding"/>
    <property type="evidence" value="ECO:0007669"/>
    <property type="project" value="InterPro"/>
</dbReference>
<dbReference type="GO" id="GO:0004523">
    <property type="term" value="F:RNA-DNA hybrid ribonuclease activity"/>
    <property type="evidence" value="ECO:0007669"/>
    <property type="project" value="UniProtKB-UniRule"/>
</dbReference>
<dbReference type="GO" id="GO:0043137">
    <property type="term" value="P:DNA replication, removal of RNA primer"/>
    <property type="evidence" value="ECO:0007669"/>
    <property type="project" value="TreeGrafter"/>
</dbReference>
<dbReference type="CDD" id="cd09278">
    <property type="entry name" value="RNase_HI_prokaryote_like"/>
    <property type="match status" value="1"/>
</dbReference>
<dbReference type="Gene3D" id="3.30.420.10">
    <property type="entry name" value="Ribonuclease H-like superfamily/Ribonuclease H"/>
    <property type="match status" value="1"/>
</dbReference>
<dbReference type="HAMAP" id="MF_00042">
    <property type="entry name" value="RNase_H"/>
    <property type="match status" value="1"/>
</dbReference>
<dbReference type="InterPro" id="IPR050092">
    <property type="entry name" value="RNase_H"/>
</dbReference>
<dbReference type="InterPro" id="IPR012337">
    <property type="entry name" value="RNaseH-like_sf"/>
</dbReference>
<dbReference type="InterPro" id="IPR002156">
    <property type="entry name" value="RNaseH_domain"/>
</dbReference>
<dbReference type="InterPro" id="IPR036397">
    <property type="entry name" value="RNaseH_sf"/>
</dbReference>
<dbReference type="InterPro" id="IPR022892">
    <property type="entry name" value="RNaseHI"/>
</dbReference>
<dbReference type="NCBIfam" id="NF005116">
    <property type="entry name" value="PRK06548.1"/>
    <property type="match status" value="1"/>
</dbReference>
<dbReference type="PANTHER" id="PTHR10642">
    <property type="entry name" value="RIBONUCLEASE H1"/>
    <property type="match status" value="1"/>
</dbReference>
<dbReference type="PANTHER" id="PTHR10642:SF26">
    <property type="entry name" value="RIBONUCLEASE H1"/>
    <property type="match status" value="1"/>
</dbReference>
<dbReference type="Pfam" id="PF00075">
    <property type="entry name" value="RNase_H"/>
    <property type="match status" value="1"/>
</dbReference>
<dbReference type="SUPFAM" id="SSF53098">
    <property type="entry name" value="Ribonuclease H-like"/>
    <property type="match status" value="1"/>
</dbReference>
<dbReference type="PROSITE" id="PS50879">
    <property type="entry name" value="RNASE_H_1"/>
    <property type="match status" value="1"/>
</dbReference>
<reference key="1">
    <citation type="journal article" date="2003" name="Lancet">
        <title>Sequencing and analysis of the genome of the Whipple's disease bacterium Tropheryma whipplei.</title>
        <authorList>
            <person name="Bentley S.D."/>
            <person name="Maiwald M."/>
            <person name="Murphy L.D."/>
            <person name="Pallen M.J."/>
            <person name="Yeats C.A."/>
            <person name="Dover L.G."/>
            <person name="Norbertczak H.T."/>
            <person name="Besra G.S."/>
            <person name="Quail M.A."/>
            <person name="Harris D.E."/>
            <person name="von Herbay A."/>
            <person name="Goble A."/>
            <person name="Rutter S."/>
            <person name="Squares R."/>
            <person name="Squares S."/>
            <person name="Barrell B.G."/>
            <person name="Parkhill J."/>
            <person name="Relman D.A."/>
        </authorList>
    </citation>
    <scope>NUCLEOTIDE SEQUENCE [LARGE SCALE GENOMIC DNA]</scope>
    <source>
        <strain>TW08/27</strain>
    </source>
</reference>
<evidence type="ECO:0000255" key="1">
    <source>
        <dbReference type="HAMAP-Rule" id="MF_00042"/>
    </source>
</evidence>
<evidence type="ECO:0000255" key="2">
    <source>
        <dbReference type="PROSITE-ProRule" id="PRU00408"/>
    </source>
</evidence>
<feature type="chain" id="PRO_0000195413" description="Ribonuclease H">
    <location>
        <begin position="1"/>
        <end position="161"/>
    </location>
</feature>
<feature type="domain" description="RNase H type-1" evidence="2">
    <location>
        <begin position="2"/>
        <end position="141"/>
    </location>
</feature>
<feature type="binding site" evidence="1">
    <location>
        <position position="11"/>
    </location>
    <ligand>
        <name>Mg(2+)</name>
        <dbReference type="ChEBI" id="CHEBI:18420"/>
        <label>1</label>
    </ligand>
</feature>
<feature type="binding site" evidence="1">
    <location>
        <position position="11"/>
    </location>
    <ligand>
        <name>Mg(2+)</name>
        <dbReference type="ChEBI" id="CHEBI:18420"/>
        <label>2</label>
    </ligand>
</feature>
<feature type="binding site" evidence="1">
    <location>
        <position position="46"/>
    </location>
    <ligand>
        <name>Mg(2+)</name>
        <dbReference type="ChEBI" id="CHEBI:18420"/>
        <label>1</label>
    </ligand>
</feature>
<feature type="binding site" evidence="1">
    <location>
        <position position="69"/>
    </location>
    <ligand>
        <name>Mg(2+)</name>
        <dbReference type="ChEBI" id="CHEBI:18420"/>
        <label>1</label>
    </ligand>
</feature>
<feature type="binding site" evidence="1">
    <location>
        <position position="133"/>
    </location>
    <ligand>
        <name>Mg(2+)</name>
        <dbReference type="ChEBI" id="CHEBI:18420"/>
        <label>2</label>
    </ligand>
</feature>
<protein>
    <recommendedName>
        <fullName evidence="1">Ribonuclease H</fullName>
        <shortName evidence="1">RNase H</shortName>
        <ecNumber evidence="1">3.1.26.4</ecNumber>
    </recommendedName>
</protein>